<proteinExistence type="evidence at transcript level"/>
<sequence>MTVVDIKIGNKYRIGRKIGSGSFGQIYLGLNTVNGEQVAVKLEPLKARHHQLEYEFRVYNILKGNIGIPTIRWFGVTNSYNAMVMDLLGPSLEDLFCYCGRKFTLKTVLLLADQLISRIEYVHSKSFLHRDIKPDNFLMKKHSNVVTMIDFGLAKKYRDFKTHVHIPYRDNKNLTGTARYASINTHIGIEQSRRDDLESLGYVLLYFCRGSLPWQGLQADTKEQKYQRIRDTKIGTPLEVLCKGLPEEFITYMCYTRQLSFTEKPNYAYLRKLFRDLLIRKGYQYDYVFDWMILKYQKRAAAAAAASATAPPQVTSPMVSQTQPVNPITPNYSSIPLPAERNPKTPQSFSTNIVQCASPSPLPLSFRSPVPNKDYEYIPSSLQPQYSAQLRRVLDEEPAP</sequence>
<gene>
    <name type="primary">hhp2</name>
    <name type="ORF">SPAC23C4.12</name>
</gene>
<comment type="function">
    <text>Involved in DNA repair. May regulate the activity of protein(s) involved in double strand break repair caused by gamma rays.</text>
</comment>
<comment type="catalytic activity">
    <reaction>
        <text>L-seryl-[protein] + ATP = O-phospho-L-seryl-[protein] + ADP + H(+)</text>
        <dbReference type="Rhea" id="RHEA:17989"/>
        <dbReference type="Rhea" id="RHEA-COMP:9863"/>
        <dbReference type="Rhea" id="RHEA-COMP:11604"/>
        <dbReference type="ChEBI" id="CHEBI:15378"/>
        <dbReference type="ChEBI" id="CHEBI:29999"/>
        <dbReference type="ChEBI" id="CHEBI:30616"/>
        <dbReference type="ChEBI" id="CHEBI:83421"/>
        <dbReference type="ChEBI" id="CHEBI:456216"/>
        <dbReference type="EC" id="2.7.11.1"/>
    </reaction>
</comment>
<comment type="catalytic activity">
    <reaction>
        <text>L-threonyl-[protein] + ATP = O-phospho-L-threonyl-[protein] + ADP + H(+)</text>
        <dbReference type="Rhea" id="RHEA:46608"/>
        <dbReference type="Rhea" id="RHEA-COMP:11060"/>
        <dbReference type="Rhea" id="RHEA-COMP:11605"/>
        <dbReference type="ChEBI" id="CHEBI:15378"/>
        <dbReference type="ChEBI" id="CHEBI:30013"/>
        <dbReference type="ChEBI" id="CHEBI:30616"/>
        <dbReference type="ChEBI" id="CHEBI:61977"/>
        <dbReference type="ChEBI" id="CHEBI:456216"/>
        <dbReference type="EC" id="2.7.11.1"/>
    </reaction>
</comment>
<comment type="subcellular location">
    <subcellularLocation>
        <location evidence="4">Nucleus</location>
    </subcellularLocation>
</comment>
<comment type="similarity">
    <text evidence="4">Belongs to the protein kinase superfamily. CK1 Ser/Thr protein kinase family. Casein kinase I subfamily.</text>
</comment>
<keyword id="KW-0067">ATP-binding</keyword>
<keyword id="KW-0227">DNA damage</keyword>
<keyword id="KW-0234">DNA repair</keyword>
<keyword id="KW-0418">Kinase</keyword>
<keyword id="KW-0547">Nucleotide-binding</keyword>
<keyword id="KW-0539">Nucleus</keyword>
<keyword id="KW-1185">Reference proteome</keyword>
<keyword id="KW-0723">Serine/threonine-protein kinase</keyword>
<keyword id="KW-0808">Transferase</keyword>
<evidence type="ECO:0000255" key="1">
    <source>
        <dbReference type="PROSITE-ProRule" id="PRU00159"/>
    </source>
</evidence>
<evidence type="ECO:0000255" key="2">
    <source>
        <dbReference type="PROSITE-ProRule" id="PRU10027"/>
    </source>
</evidence>
<evidence type="ECO:0000256" key="3">
    <source>
        <dbReference type="SAM" id="MobiDB-lite"/>
    </source>
</evidence>
<evidence type="ECO:0000305" key="4"/>
<name>HHP2_SCHPO</name>
<reference key="1">
    <citation type="journal article" date="1994" name="Biochem. Biophys. Res. Commun.">
        <title>Molecular cloning and sequence analysis of two novel fission yeast casein kinase-1 isoforms.</title>
        <authorList>
            <person name="Kearney P."/>
            <person name="Ebert M."/>
            <person name="Kuret J."/>
        </authorList>
    </citation>
    <scope>NUCLEOTIDE SEQUENCE [MRNA]</scope>
    <source>
        <strain>SP66</strain>
    </source>
</reference>
<reference key="2">
    <citation type="journal article" date="1994" name="EMBO J.">
        <title>Characterization of two protein kinases from Schizosaccharomyces pombe involved in the regulation of DNA repair.</title>
        <authorList>
            <person name="Dhillon N."/>
            <person name="Hoekstra M.F."/>
        </authorList>
    </citation>
    <scope>NUCLEOTIDE SEQUENCE [MRNA]</scope>
</reference>
<reference key="3">
    <citation type="journal article" date="2002" name="Nature">
        <title>The genome sequence of Schizosaccharomyces pombe.</title>
        <authorList>
            <person name="Wood V."/>
            <person name="Gwilliam R."/>
            <person name="Rajandream M.A."/>
            <person name="Lyne M.H."/>
            <person name="Lyne R."/>
            <person name="Stewart A."/>
            <person name="Sgouros J.G."/>
            <person name="Peat N."/>
            <person name="Hayles J."/>
            <person name="Baker S.G."/>
            <person name="Basham D."/>
            <person name="Bowman S."/>
            <person name="Brooks K."/>
            <person name="Brown D."/>
            <person name="Brown S."/>
            <person name="Chillingworth T."/>
            <person name="Churcher C.M."/>
            <person name="Collins M."/>
            <person name="Connor R."/>
            <person name="Cronin A."/>
            <person name="Davis P."/>
            <person name="Feltwell T."/>
            <person name="Fraser A."/>
            <person name="Gentles S."/>
            <person name="Goble A."/>
            <person name="Hamlin N."/>
            <person name="Harris D.E."/>
            <person name="Hidalgo J."/>
            <person name="Hodgson G."/>
            <person name="Holroyd S."/>
            <person name="Hornsby T."/>
            <person name="Howarth S."/>
            <person name="Huckle E.J."/>
            <person name="Hunt S."/>
            <person name="Jagels K."/>
            <person name="James K.D."/>
            <person name="Jones L."/>
            <person name="Jones M."/>
            <person name="Leather S."/>
            <person name="McDonald S."/>
            <person name="McLean J."/>
            <person name="Mooney P."/>
            <person name="Moule S."/>
            <person name="Mungall K.L."/>
            <person name="Murphy L.D."/>
            <person name="Niblett D."/>
            <person name="Odell C."/>
            <person name="Oliver K."/>
            <person name="O'Neil S."/>
            <person name="Pearson D."/>
            <person name="Quail M.A."/>
            <person name="Rabbinowitsch E."/>
            <person name="Rutherford K.M."/>
            <person name="Rutter S."/>
            <person name="Saunders D."/>
            <person name="Seeger K."/>
            <person name="Sharp S."/>
            <person name="Skelton J."/>
            <person name="Simmonds M.N."/>
            <person name="Squares R."/>
            <person name="Squares S."/>
            <person name="Stevens K."/>
            <person name="Taylor K."/>
            <person name="Taylor R.G."/>
            <person name="Tivey A."/>
            <person name="Walsh S.V."/>
            <person name="Warren T."/>
            <person name="Whitehead S."/>
            <person name="Woodward J.R."/>
            <person name="Volckaert G."/>
            <person name="Aert R."/>
            <person name="Robben J."/>
            <person name="Grymonprez B."/>
            <person name="Weltjens I."/>
            <person name="Vanstreels E."/>
            <person name="Rieger M."/>
            <person name="Schaefer M."/>
            <person name="Mueller-Auer S."/>
            <person name="Gabel C."/>
            <person name="Fuchs M."/>
            <person name="Duesterhoeft A."/>
            <person name="Fritzc C."/>
            <person name="Holzer E."/>
            <person name="Moestl D."/>
            <person name="Hilbert H."/>
            <person name="Borzym K."/>
            <person name="Langer I."/>
            <person name="Beck A."/>
            <person name="Lehrach H."/>
            <person name="Reinhardt R."/>
            <person name="Pohl T.M."/>
            <person name="Eger P."/>
            <person name="Zimmermann W."/>
            <person name="Wedler H."/>
            <person name="Wambutt R."/>
            <person name="Purnelle B."/>
            <person name="Goffeau A."/>
            <person name="Cadieu E."/>
            <person name="Dreano S."/>
            <person name="Gloux S."/>
            <person name="Lelaure V."/>
            <person name="Mottier S."/>
            <person name="Galibert F."/>
            <person name="Aves S.J."/>
            <person name="Xiang Z."/>
            <person name="Hunt C."/>
            <person name="Moore K."/>
            <person name="Hurst S.M."/>
            <person name="Lucas M."/>
            <person name="Rochet M."/>
            <person name="Gaillardin C."/>
            <person name="Tallada V.A."/>
            <person name="Garzon A."/>
            <person name="Thode G."/>
            <person name="Daga R.R."/>
            <person name="Cruzado L."/>
            <person name="Jimenez J."/>
            <person name="Sanchez M."/>
            <person name="del Rey F."/>
            <person name="Benito J."/>
            <person name="Dominguez A."/>
            <person name="Revuelta J.L."/>
            <person name="Moreno S."/>
            <person name="Armstrong J."/>
            <person name="Forsburg S.L."/>
            <person name="Cerutti L."/>
            <person name="Lowe T."/>
            <person name="McCombie W.R."/>
            <person name="Paulsen I."/>
            <person name="Potashkin J."/>
            <person name="Shpakovski G.V."/>
            <person name="Ussery D."/>
            <person name="Barrell B.G."/>
            <person name="Nurse P."/>
        </authorList>
    </citation>
    <scope>NUCLEOTIDE SEQUENCE [LARGE SCALE GENOMIC DNA]</scope>
    <source>
        <strain>972 / ATCC 24843</strain>
    </source>
</reference>
<organism>
    <name type="scientific">Schizosaccharomyces pombe (strain 972 / ATCC 24843)</name>
    <name type="common">Fission yeast</name>
    <dbReference type="NCBI Taxonomy" id="284812"/>
    <lineage>
        <taxon>Eukaryota</taxon>
        <taxon>Fungi</taxon>
        <taxon>Dikarya</taxon>
        <taxon>Ascomycota</taxon>
        <taxon>Taphrinomycotina</taxon>
        <taxon>Schizosaccharomycetes</taxon>
        <taxon>Schizosaccharomycetales</taxon>
        <taxon>Schizosaccharomycetaceae</taxon>
        <taxon>Schizosaccharomyces</taxon>
    </lineage>
</organism>
<dbReference type="EC" id="2.7.11.1"/>
<dbReference type="EMBL" id="U10864">
    <property type="protein sequence ID" value="AAA21545.1"/>
    <property type="molecule type" value="mRNA"/>
</dbReference>
<dbReference type="EMBL" id="X78872">
    <property type="protein sequence ID" value="CAA55474.1"/>
    <property type="molecule type" value="mRNA"/>
</dbReference>
<dbReference type="EMBL" id="CU329670">
    <property type="protein sequence ID" value="CAB16883.1"/>
    <property type="molecule type" value="Genomic_DNA"/>
</dbReference>
<dbReference type="PIR" id="S46358">
    <property type="entry name" value="S46358"/>
</dbReference>
<dbReference type="RefSeq" id="NP_593184.1">
    <property type="nucleotide sequence ID" value="NM_001018580.2"/>
</dbReference>
<dbReference type="SMR" id="P40236"/>
<dbReference type="BioGRID" id="278417">
    <property type="interactions" value="59"/>
</dbReference>
<dbReference type="FunCoup" id="P40236">
    <property type="interactions" value="321"/>
</dbReference>
<dbReference type="STRING" id="284812.P40236"/>
<dbReference type="iPTMnet" id="P40236"/>
<dbReference type="PaxDb" id="4896-SPAC23C4.12.1"/>
<dbReference type="EnsemblFungi" id="SPAC23C4.12.1">
    <property type="protein sequence ID" value="SPAC23C4.12.1:pep"/>
    <property type="gene ID" value="SPAC23C4.12"/>
</dbReference>
<dbReference type="GeneID" id="2541929"/>
<dbReference type="KEGG" id="spo:2541929"/>
<dbReference type="PomBase" id="SPAC23C4.12">
    <property type="gene designation" value="hhp2"/>
</dbReference>
<dbReference type="VEuPathDB" id="FungiDB:SPAC23C4.12"/>
<dbReference type="eggNOG" id="KOG1164">
    <property type="taxonomic scope" value="Eukaryota"/>
</dbReference>
<dbReference type="HOGENOM" id="CLU_019279_2_0_1"/>
<dbReference type="InParanoid" id="P40236"/>
<dbReference type="OMA" id="HHQLEYE"/>
<dbReference type="PhylomeDB" id="P40236"/>
<dbReference type="BRENDA" id="2.7.11.1">
    <property type="organism ID" value="5613"/>
</dbReference>
<dbReference type="PRO" id="PR:P40236"/>
<dbReference type="Proteomes" id="UP000002485">
    <property type="component" value="Chromosome I"/>
</dbReference>
<dbReference type="GO" id="GO:0032153">
    <property type="term" value="C:cell division site"/>
    <property type="evidence" value="ECO:0000314"/>
    <property type="project" value="PomBase"/>
</dbReference>
<dbReference type="GO" id="GO:0005737">
    <property type="term" value="C:cytoplasm"/>
    <property type="evidence" value="ECO:0000318"/>
    <property type="project" value="GO_Central"/>
</dbReference>
<dbReference type="GO" id="GO:0035838">
    <property type="term" value="C:growing cell tip"/>
    <property type="evidence" value="ECO:0000314"/>
    <property type="project" value="PomBase"/>
</dbReference>
<dbReference type="GO" id="GO:0044732">
    <property type="term" value="C:mitotic spindle pole body"/>
    <property type="evidence" value="ECO:0000314"/>
    <property type="project" value="PomBase"/>
</dbReference>
<dbReference type="GO" id="GO:0000228">
    <property type="term" value="C:nuclear chromosome"/>
    <property type="evidence" value="ECO:0000314"/>
    <property type="project" value="PomBase"/>
</dbReference>
<dbReference type="GO" id="GO:0005634">
    <property type="term" value="C:nucleus"/>
    <property type="evidence" value="ECO:0000314"/>
    <property type="project" value="PomBase"/>
</dbReference>
<dbReference type="GO" id="GO:0005816">
    <property type="term" value="C:spindle pole body"/>
    <property type="evidence" value="ECO:0000314"/>
    <property type="project" value="PomBase"/>
</dbReference>
<dbReference type="GO" id="GO:0005524">
    <property type="term" value="F:ATP binding"/>
    <property type="evidence" value="ECO:0000255"/>
    <property type="project" value="PomBase"/>
</dbReference>
<dbReference type="GO" id="GO:0106310">
    <property type="term" value="F:protein serine kinase activity"/>
    <property type="evidence" value="ECO:0007669"/>
    <property type="project" value="RHEA"/>
</dbReference>
<dbReference type="GO" id="GO:0004674">
    <property type="term" value="F:protein serine/threonine kinase activity"/>
    <property type="evidence" value="ECO:0000314"/>
    <property type="project" value="PomBase"/>
</dbReference>
<dbReference type="GO" id="GO:0004713">
    <property type="term" value="F:protein tyrosine kinase activity"/>
    <property type="evidence" value="ECO:0000314"/>
    <property type="project" value="PomBase"/>
</dbReference>
<dbReference type="GO" id="GO:0006281">
    <property type="term" value="P:DNA repair"/>
    <property type="evidence" value="ECO:0007669"/>
    <property type="project" value="UniProtKB-KW"/>
</dbReference>
<dbReference type="GO" id="GO:0006897">
    <property type="term" value="P:endocytosis"/>
    <property type="evidence" value="ECO:0000318"/>
    <property type="project" value="GO_Central"/>
</dbReference>
<dbReference type="GO" id="GO:0045143">
    <property type="term" value="P:homologous chromosome segregation"/>
    <property type="evidence" value="ECO:0000316"/>
    <property type="project" value="PomBase"/>
</dbReference>
<dbReference type="GO" id="GO:0051755">
    <property type="term" value="P:meiotic sister chromatid arm separation"/>
    <property type="evidence" value="ECO:0000315"/>
    <property type="project" value="PomBase"/>
</dbReference>
<dbReference type="GO" id="GO:0010895">
    <property type="term" value="P:negative regulation of ergosterol biosynthetic process"/>
    <property type="evidence" value="ECO:0000315"/>
    <property type="project" value="PomBase"/>
</dbReference>
<dbReference type="GO" id="GO:0000122">
    <property type="term" value="P:negative regulation of transcription by RNA polymerase II"/>
    <property type="evidence" value="ECO:0000315"/>
    <property type="project" value="PomBase"/>
</dbReference>
<dbReference type="GO" id="GO:2000781">
    <property type="term" value="P:positive regulation of double-strand break repair"/>
    <property type="evidence" value="ECO:0000315"/>
    <property type="project" value="PomBase"/>
</dbReference>
<dbReference type="GO" id="GO:0006282">
    <property type="term" value="P:regulation of DNA repair"/>
    <property type="evidence" value="ECO:0000315"/>
    <property type="project" value="PomBase"/>
</dbReference>
<dbReference type="GO" id="GO:0090006">
    <property type="term" value="P:regulation of linear element assembly"/>
    <property type="evidence" value="ECO:0000315"/>
    <property type="project" value="PomBase"/>
</dbReference>
<dbReference type="GO" id="GO:0007165">
    <property type="term" value="P:signal transduction"/>
    <property type="evidence" value="ECO:0000318"/>
    <property type="project" value="GO_Central"/>
</dbReference>
<dbReference type="GO" id="GO:0032933">
    <property type="term" value="P:SREBP signaling pathway"/>
    <property type="evidence" value="ECO:0000315"/>
    <property type="project" value="PomBase"/>
</dbReference>
<dbReference type="FunFam" id="1.10.510.10:FF:000635">
    <property type="entry name" value="Casein kinase I"/>
    <property type="match status" value="1"/>
</dbReference>
<dbReference type="Gene3D" id="1.10.510.10">
    <property type="entry name" value="Transferase(Phosphotransferase) domain 1"/>
    <property type="match status" value="1"/>
</dbReference>
<dbReference type="InterPro" id="IPR050235">
    <property type="entry name" value="CK1_Ser-Thr_kinase"/>
</dbReference>
<dbReference type="InterPro" id="IPR011009">
    <property type="entry name" value="Kinase-like_dom_sf"/>
</dbReference>
<dbReference type="InterPro" id="IPR000719">
    <property type="entry name" value="Prot_kinase_dom"/>
</dbReference>
<dbReference type="InterPro" id="IPR017441">
    <property type="entry name" value="Protein_kinase_ATP_BS"/>
</dbReference>
<dbReference type="InterPro" id="IPR008271">
    <property type="entry name" value="Ser/Thr_kinase_AS"/>
</dbReference>
<dbReference type="PANTHER" id="PTHR11909">
    <property type="entry name" value="CASEIN KINASE-RELATED"/>
    <property type="match status" value="1"/>
</dbReference>
<dbReference type="Pfam" id="PF00069">
    <property type="entry name" value="Pkinase"/>
    <property type="match status" value="1"/>
</dbReference>
<dbReference type="SMART" id="SM00220">
    <property type="entry name" value="S_TKc"/>
    <property type="match status" value="1"/>
</dbReference>
<dbReference type="SUPFAM" id="SSF56112">
    <property type="entry name" value="Protein kinase-like (PK-like)"/>
    <property type="match status" value="1"/>
</dbReference>
<dbReference type="PROSITE" id="PS00107">
    <property type="entry name" value="PROTEIN_KINASE_ATP"/>
    <property type="match status" value="1"/>
</dbReference>
<dbReference type="PROSITE" id="PS50011">
    <property type="entry name" value="PROTEIN_KINASE_DOM"/>
    <property type="match status" value="1"/>
</dbReference>
<dbReference type="PROSITE" id="PS00108">
    <property type="entry name" value="PROTEIN_KINASE_ST"/>
    <property type="match status" value="1"/>
</dbReference>
<accession>P40236</accession>
<feature type="chain" id="PRO_0000192865" description="Casein kinase I homolog hhp2">
    <location>
        <begin position="1"/>
        <end position="400"/>
    </location>
</feature>
<feature type="domain" description="Protein kinase" evidence="1">
    <location>
        <begin position="12"/>
        <end position="278"/>
    </location>
</feature>
<feature type="region of interest" description="Disordered" evidence="3">
    <location>
        <begin position="330"/>
        <end position="352"/>
    </location>
</feature>
<feature type="active site" description="Proton acceptor" evidence="1 2">
    <location>
        <position position="131"/>
    </location>
</feature>
<feature type="binding site" evidence="1">
    <location>
        <begin position="18"/>
        <end position="26"/>
    </location>
    <ligand>
        <name>ATP</name>
        <dbReference type="ChEBI" id="CHEBI:30616"/>
    </ligand>
</feature>
<feature type="binding site" evidence="1">
    <location>
        <position position="41"/>
    </location>
    <ligand>
        <name>ATP</name>
        <dbReference type="ChEBI" id="CHEBI:30616"/>
    </ligand>
</feature>
<feature type="sequence conflict" description="In Ref. 1; AAA21545." evidence="4" ref="1">
    <location>
        <position position="4"/>
    </location>
</feature>
<protein>
    <recommendedName>
        <fullName>Casein kinase I homolog hhp2</fullName>
        <ecNumber>2.7.11.1</ecNumber>
    </recommendedName>
</protein>